<dbReference type="EMBL" id="BA000022">
    <property type="protein sequence ID" value="BAA10474.1"/>
    <property type="molecule type" value="Genomic_DNA"/>
</dbReference>
<dbReference type="PIR" id="S75739">
    <property type="entry name" value="S75739"/>
</dbReference>
<dbReference type="PDB" id="2KT9">
    <property type="method" value="NMR"/>
    <property type="chains" value="A=6-112"/>
</dbReference>
<dbReference type="PDBsum" id="2KT9"/>
<dbReference type="BMRB" id="Q55385"/>
<dbReference type="SMR" id="Q55385"/>
<dbReference type="IntAct" id="Q55385">
    <property type="interactions" value="5"/>
</dbReference>
<dbReference type="STRING" id="1148.gene:10499977"/>
<dbReference type="PaxDb" id="1148-1001233"/>
<dbReference type="EnsemblBacteria" id="BAA10474">
    <property type="protein sequence ID" value="BAA10474"/>
    <property type="gene ID" value="BAA10474"/>
</dbReference>
<dbReference type="KEGG" id="syn:slr0923"/>
<dbReference type="eggNOG" id="ENOG503137T">
    <property type="taxonomic scope" value="Bacteria"/>
</dbReference>
<dbReference type="InParanoid" id="Q55385"/>
<dbReference type="PhylomeDB" id="Q55385"/>
<dbReference type="EvolutionaryTrace" id="Q55385"/>
<dbReference type="Proteomes" id="UP000001425">
    <property type="component" value="Chromosome"/>
</dbReference>
<dbReference type="GO" id="GO:1990904">
    <property type="term" value="C:ribonucleoprotein complex"/>
    <property type="evidence" value="ECO:0007669"/>
    <property type="project" value="UniProtKB-KW"/>
</dbReference>
<dbReference type="GO" id="GO:0005840">
    <property type="term" value="C:ribosome"/>
    <property type="evidence" value="ECO:0007669"/>
    <property type="project" value="UniProtKB-KW"/>
</dbReference>
<dbReference type="GO" id="GO:0003735">
    <property type="term" value="F:structural constituent of ribosome"/>
    <property type="evidence" value="ECO:0007669"/>
    <property type="project" value="InterPro"/>
</dbReference>
<dbReference type="GO" id="GO:0006412">
    <property type="term" value="P:translation"/>
    <property type="evidence" value="ECO:0007669"/>
    <property type="project" value="UniProtKB-UniRule"/>
</dbReference>
<dbReference type="Gene3D" id="3.30.390.140">
    <property type="match status" value="1"/>
</dbReference>
<dbReference type="HAMAP" id="MF_00619">
    <property type="entry name" value="Ribosomal_plastid_cS23"/>
    <property type="match status" value="1"/>
</dbReference>
<dbReference type="InterPro" id="IPR038447">
    <property type="entry name" value="PSRP-3/Ycf65_sf"/>
</dbReference>
<dbReference type="InterPro" id="IPR006924">
    <property type="entry name" value="Ribosomal_PSRP3/Ycf65"/>
</dbReference>
<dbReference type="NCBIfam" id="NF002740">
    <property type="entry name" value="PRK02724.1"/>
    <property type="match status" value="1"/>
</dbReference>
<dbReference type="PANTHER" id="PTHR35108">
    <property type="entry name" value="30S RIBOSOMAL PROTEIN 3, CHLOROPLASTIC"/>
    <property type="match status" value="1"/>
</dbReference>
<dbReference type="PANTHER" id="PTHR35108:SF1">
    <property type="entry name" value="OS04G0461100 PROTEIN"/>
    <property type="match status" value="1"/>
</dbReference>
<dbReference type="Pfam" id="PF04839">
    <property type="entry name" value="PSRP-3_Ycf65"/>
    <property type="match status" value="1"/>
</dbReference>
<accession>Q55385</accession>
<organism>
    <name type="scientific">Synechocystis sp. (strain ATCC 27184 / PCC 6803 / Kazusa)</name>
    <dbReference type="NCBI Taxonomy" id="1111708"/>
    <lineage>
        <taxon>Bacteria</taxon>
        <taxon>Bacillati</taxon>
        <taxon>Cyanobacteriota</taxon>
        <taxon>Cyanophyceae</taxon>
        <taxon>Synechococcales</taxon>
        <taxon>Merismopediaceae</taxon>
        <taxon>Synechocystis</taxon>
    </lineage>
</organism>
<sequence length="112" mass="12638">MTTAEAASTVHTSFILKVLWLDQNVAIAVDQIVGKGTSPLTSYFFWPRADAWQQLKDELEAKHWIAEADRINVLNQATEVINFWQDLKNQNKQISMAEAQGKFPEVVFSGSN</sequence>
<protein>
    <recommendedName>
        <fullName evidence="2">Probable small ribosomal subunit protein cS23</fullName>
    </recommendedName>
    <alternativeName>
        <fullName evidence="3">Probable 30S ribosomal protein PSRP-3</fullName>
    </alternativeName>
    <alternativeName>
        <fullName evidence="3">Ycf65-like protein</fullName>
    </alternativeName>
</protein>
<feature type="chain" id="PRO_0000216754" description="Probable small ribosomal subunit protein cS23">
    <location>
        <begin position="1"/>
        <end position="112"/>
    </location>
</feature>
<feature type="strand" evidence="6">
    <location>
        <begin position="14"/>
        <end position="20"/>
    </location>
</feature>
<feature type="strand" evidence="6">
    <location>
        <begin position="25"/>
        <end position="33"/>
    </location>
</feature>
<feature type="strand" evidence="6">
    <location>
        <begin position="36"/>
        <end position="39"/>
    </location>
</feature>
<feature type="strand" evidence="6">
    <location>
        <begin position="44"/>
        <end position="46"/>
    </location>
</feature>
<feature type="helix" evidence="6">
    <location>
        <begin position="51"/>
        <end position="61"/>
    </location>
</feature>
<feature type="helix" evidence="6">
    <location>
        <begin position="67"/>
        <end position="90"/>
    </location>
</feature>
<feature type="helix" evidence="6">
    <location>
        <begin position="96"/>
        <end position="100"/>
    </location>
</feature>
<feature type="strand" evidence="6">
    <location>
        <begin position="107"/>
        <end position="110"/>
    </location>
</feature>
<name>RRP3_SYNY3</name>
<gene>
    <name type="ordered locus">slr0923</name>
</gene>
<reference key="1">
    <citation type="journal article" date="1995" name="DNA Res.">
        <title>Sequence analysis of the genome of the unicellular cyanobacterium Synechocystis sp. strain PCC6803. I. Sequence features in the 1 Mb region from map positions 64% to 92% of the genome.</title>
        <authorList>
            <person name="Kaneko T."/>
            <person name="Tanaka A."/>
            <person name="Sato S."/>
            <person name="Kotani H."/>
            <person name="Sazuka T."/>
            <person name="Miyajima N."/>
            <person name="Sugiura M."/>
            <person name="Tabata S."/>
        </authorList>
    </citation>
    <scope>NUCLEOTIDE SEQUENCE [LARGE SCALE GENOMIC DNA]</scope>
    <source>
        <strain>ATCC 27184 / PCC 6803 / N-1</strain>
    </source>
</reference>
<reference key="2">
    <citation type="journal article" date="1996" name="DNA Res.">
        <title>Sequence analysis of the genome of the unicellular cyanobacterium Synechocystis sp. strain PCC6803. II. Sequence determination of the entire genome and assignment of potential protein-coding regions.</title>
        <authorList>
            <person name="Kaneko T."/>
            <person name="Sato S."/>
            <person name="Kotani H."/>
            <person name="Tanaka A."/>
            <person name="Asamizu E."/>
            <person name="Nakamura Y."/>
            <person name="Miyajima N."/>
            <person name="Hirosawa M."/>
            <person name="Sugiura M."/>
            <person name="Sasamoto S."/>
            <person name="Kimura T."/>
            <person name="Hosouchi T."/>
            <person name="Matsuno A."/>
            <person name="Muraki A."/>
            <person name="Nakazaki N."/>
            <person name="Naruo K."/>
            <person name="Okumura S."/>
            <person name="Shimpo S."/>
            <person name="Takeuchi C."/>
            <person name="Wada T."/>
            <person name="Watanabe A."/>
            <person name="Yamada M."/>
            <person name="Yasuda M."/>
            <person name="Tabata S."/>
        </authorList>
    </citation>
    <scope>NUCLEOTIDE SEQUENCE [LARGE SCALE GENOMIC DNA]</scope>
    <source>
        <strain>ATCC 27184 / PCC 6803 / Kazusa</strain>
    </source>
</reference>
<reference evidence="5" key="3">
    <citation type="submission" date="2010-01" db="PDB data bank">
        <title>Solution NMR Structure of Probable 30S ribosomal protein PSRP-3 (Ycf65-like protein) from Synechocystis sp. (PCC 6803), Northeast Structural Genomics Consortium Target Target SgR46.</title>
        <authorList>
            <person name="Liu G."/>
            <person name="Janjua J."/>
            <person name="Xiao R."/>
            <person name="Buchwald W.A."/>
            <person name="Ciccosanti C."/>
            <person name="Belote R.L."/>
            <person name="Everett E.K."/>
            <person name="Nair R."/>
            <person name="Acton A.B."/>
            <person name="Rost B."/>
            <person name="Montelione G.T."/>
        </authorList>
    </citation>
    <scope>STRUCTURE BY NMR OF 6-112</scope>
</reference>
<comment type="function">
    <text evidence="1">Probably a ribosomal protein or a ribosome-associated protein.</text>
</comment>
<comment type="subunit">
    <text evidence="4">Part of the 30S ribosomal subunit.</text>
</comment>
<comment type="similarity">
    <text evidence="4">Belongs to the chloroplast-specific ribosomal protein cS23 family.</text>
</comment>
<evidence type="ECO:0000250" key="1"/>
<evidence type="ECO:0000255" key="2">
    <source>
        <dbReference type="HAMAP-Rule" id="MF_00619"/>
    </source>
</evidence>
<evidence type="ECO:0000303" key="3">
    <source ref="3"/>
</evidence>
<evidence type="ECO:0000305" key="4"/>
<evidence type="ECO:0007744" key="5">
    <source>
        <dbReference type="PDB" id="2KT9"/>
    </source>
</evidence>
<evidence type="ECO:0007829" key="6">
    <source>
        <dbReference type="PDB" id="2KT9"/>
    </source>
</evidence>
<keyword id="KW-0002">3D-structure</keyword>
<keyword id="KW-1185">Reference proteome</keyword>
<keyword id="KW-0687">Ribonucleoprotein</keyword>
<keyword id="KW-0689">Ribosomal protein</keyword>
<proteinExistence type="evidence at protein level"/>